<accession>Q7VQX1</accession>
<proteinExistence type="inferred from homology"/>
<dbReference type="EC" id="2.4.2.17" evidence="1"/>
<dbReference type="EMBL" id="BX248583">
    <property type="protein sequence ID" value="CAD83521.1"/>
    <property type="molecule type" value="Genomic_DNA"/>
</dbReference>
<dbReference type="SMR" id="Q7VQX1"/>
<dbReference type="STRING" id="203907.Bfl462"/>
<dbReference type="KEGG" id="bfl:Bfl462"/>
<dbReference type="eggNOG" id="COG0040">
    <property type="taxonomic scope" value="Bacteria"/>
</dbReference>
<dbReference type="HOGENOM" id="CLU_038115_1_0_6"/>
<dbReference type="OrthoDB" id="9801867at2"/>
<dbReference type="UniPathway" id="UPA00031">
    <property type="reaction ID" value="UER00006"/>
</dbReference>
<dbReference type="Proteomes" id="UP000002192">
    <property type="component" value="Chromosome"/>
</dbReference>
<dbReference type="GO" id="GO:0005737">
    <property type="term" value="C:cytoplasm"/>
    <property type="evidence" value="ECO:0007669"/>
    <property type="project" value="UniProtKB-SubCell"/>
</dbReference>
<dbReference type="GO" id="GO:0005524">
    <property type="term" value="F:ATP binding"/>
    <property type="evidence" value="ECO:0007669"/>
    <property type="project" value="UniProtKB-KW"/>
</dbReference>
<dbReference type="GO" id="GO:0003879">
    <property type="term" value="F:ATP phosphoribosyltransferase activity"/>
    <property type="evidence" value="ECO:0007669"/>
    <property type="project" value="UniProtKB-UniRule"/>
</dbReference>
<dbReference type="GO" id="GO:0000287">
    <property type="term" value="F:magnesium ion binding"/>
    <property type="evidence" value="ECO:0007669"/>
    <property type="project" value="UniProtKB-UniRule"/>
</dbReference>
<dbReference type="GO" id="GO:0000105">
    <property type="term" value="P:L-histidine biosynthetic process"/>
    <property type="evidence" value="ECO:0007669"/>
    <property type="project" value="UniProtKB-UniRule"/>
</dbReference>
<dbReference type="CDD" id="cd13592">
    <property type="entry name" value="PBP2_HisGL2"/>
    <property type="match status" value="1"/>
</dbReference>
<dbReference type="FunFam" id="3.30.70.120:FF:000002">
    <property type="entry name" value="ATP phosphoribosyltransferase"/>
    <property type="match status" value="1"/>
</dbReference>
<dbReference type="FunFam" id="3.40.190.10:FF:000008">
    <property type="entry name" value="ATP phosphoribosyltransferase"/>
    <property type="match status" value="1"/>
</dbReference>
<dbReference type="Gene3D" id="3.30.70.120">
    <property type="match status" value="1"/>
</dbReference>
<dbReference type="Gene3D" id="3.40.190.10">
    <property type="entry name" value="Periplasmic binding protein-like II"/>
    <property type="match status" value="2"/>
</dbReference>
<dbReference type="HAMAP" id="MF_00079">
    <property type="entry name" value="HisG_Long"/>
    <property type="match status" value="1"/>
</dbReference>
<dbReference type="InterPro" id="IPR020621">
    <property type="entry name" value="ATP-PRT_HisG_long"/>
</dbReference>
<dbReference type="InterPro" id="IPR013820">
    <property type="entry name" value="ATP_PRibTrfase_cat"/>
</dbReference>
<dbReference type="InterPro" id="IPR018198">
    <property type="entry name" value="ATP_PRibTrfase_CS"/>
</dbReference>
<dbReference type="InterPro" id="IPR001348">
    <property type="entry name" value="ATP_PRibTrfase_HisG"/>
</dbReference>
<dbReference type="InterPro" id="IPR013115">
    <property type="entry name" value="HisG_C"/>
</dbReference>
<dbReference type="InterPro" id="IPR011322">
    <property type="entry name" value="N-reg_PII-like_a/b"/>
</dbReference>
<dbReference type="InterPro" id="IPR015867">
    <property type="entry name" value="N-reg_PII/ATP_PRibTrfase_C"/>
</dbReference>
<dbReference type="NCBIfam" id="TIGR00070">
    <property type="entry name" value="hisG"/>
    <property type="match status" value="1"/>
</dbReference>
<dbReference type="NCBIfam" id="TIGR03455">
    <property type="entry name" value="HisG_C-term"/>
    <property type="match status" value="1"/>
</dbReference>
<dbReference type="PANTHER" id="PTHR21403:SF8">
    <property type="entry name" value="ATP PHOSPHORIBOSYLTRANSFERASE"/>
    <property type="match status" value="1"/>
</dbReference>
<dbReference type="PANTHER" id="PTHR21403">
    <property type="entry name" value="ATP PHOSPHORIBOSYLTRANSFERASE ATP-PRTASE"/>
    <property type="match status" value="1"/>
</dbReference>
<dbReference type="Pfam" id="PF01634">
    <property type="entry name" value="HisG"/>
    <property type="match status" value="1"/>
</dbReference>
<dbReference type="Pfam" id="PF08029">
    <property type="entry name" value="HisG_C"/>
    <property type="match status" value="1"/>
</dbReference>
<dbReference type="SUPFAM" id="SSF54913">
    <property type="entry name" value="GlnB-like"/>
    <property type="match status" value="1"/>
</dbReference>
<dbReference type="SUPFAM" id="SSF53850">
    <property type="entry name" value="Periplasmic binding protein-like II"/>
    <property type="match status" value="1"/>
</dbReference>
<dbReference type="PROSITE" id="PS01316">
    <property type="entry name" value="ATP_P_PHORIBOSYLTR"/>
    <property type="match status" value="1"/>
</dbReference>
<name>HIS1_BLOFL</name>
<gene>
    <name evidence="1" type="primary">hisG</name>
    <name type="ordered locus">Bfl462</name>
</gene>
<comment type="function">
    <text evidence="1">Catalyzes the condensation of ATP and 5-phosphoribose 1-diphosphate to form N'-(5'-phosphoribosyl)-ATP (PR-ATP). Has a crucial role in the pathway because the rate of histidine biosynthesis seems to be controlled primarily by regulation of HisG enzymatic activity.</text>
</comment>
<comment type="catalytic activity">
    <reaction evidence="1">
        <text>1-(5-phospho-beta-D-ribosyl)-ATP + diphosphate = 5-phospho-alpha-D-ribose 1-diphosphate + ATP</text>
        <dbReference type="Rhea" id="RHEA:18473"/>
        <dbReference type="ChEBI" id="CHEBI:30616"/>
        <dbReference type="ChEBI" id="CHEBI:33019"/>
        <dbReference type="ChEBI" id="CHEBI:58017"/>
        <dbReference type="ChEBI" id="CHEBI:73183"/>
        <dbReference type="EC" id="2.4.2.17"/>
    </reaction>
</comment>
<comment type="cofactor">
    <cofactor evidence="1">
        <name>Mg(2+)</name>
        <dbReference type="ChEBI" id="CHEBI:18420"/>
    </cofactor>
</comment>
<comment type="activity regulation">
    <text evidence="1">Feedback inhibited by histidine.</text>
</comment>
<comment type="pathway">
    <text evidence="1">Amino-acid biosynthesis; L-histidine biosynthesis; L-histidine from 5-phospho-alpha-D-ribose 1-diphosphate: step 1/9.</text>
</comment>
<comment type="subunit">
    <text evidence="1">Equilibrium between an active dimeric form, an inactive hexameric form and higher aggregates. Interconversion between the various forms is largely reversible and is influenced by the natural substrates and inhibitors of the enzyme.</text>
</comment>
<comment type="subcellular location">
    <subcellularLocation>
        <location evidence="1">Cytoplasm</location>
    </subcellularLocation>
</comment>
<comment type="similarity">
    <text evidence="1">Belongs to the ATP phosphoribosyltransferase family. Long subfamily.</text>
</comment>
<reference key="1">
    <citation type="journal article" date="2003" name="Proc. Natl. Acad. Sci. U.S.A.">
        <title>The genome sequence of Blochmannia floridanus: comparative analysis of reduced genomes.</title>
        <authorList>
            <person name="Gil R."/>
            <person name="Silva F.J."/>
            <person name="Zientz E."/>
            <person name="Delmotte F."/>
            <person name="Gonzalez-Candelas F."/>
            <person name="Latorre A."/>
            <person name="Rausell C."/>
            <person name="Kamerbeek J."/>
            <person name="Gadau J."/>
            <person name="Hoelldobler B."/>
            <person name="van Ham R.C.H.J."/>
            <person name="Gross R."/>
            <person name="Moya A."/>
        </authorList>
    </citation>
    <scope>NUCLEOTIDE SEQUENCE [LARGE SCALE GENOMIC DNA]</scope>
</reference>
<organism>
    <name type="scientific">Blochmanniella floridana</name>
    <dbReference type="NCBI Taxonomy" id="203907"/>
    <lineage>
        <taxon>Bacteria</taxon>
        <taxon>Pseudomonadati</taxon>
        <taxon>Pseudomonadota</taxon>
        <taxon>Gammaproteobacteria</taxon>
        <taxon>Enterobacterales</taxon>
        <taxon>Enterobacteriaceae</taxon>
        <taxon>ant endosymbionts</taxon>
        <taxon>Candidatus Blochmanniella</taxon>
    </lineage>
</organism>
<protein>
    <recommendedName>
        <fullName evidence="1">ATP phosphoribosyltransferase</fullName>
        <shortName evidence="1">ATP-PRT</shortName>
        <shortName evidence="1">ATP-PRTase</shortName>
        <ecNumber evidence="1">2.4.2.17</ecNumber>
    </recommendedName>
</protein>
<sequence>MLDKSRLRIAMQKSGRLSKESQKLLEQCGIKINLQQQQLLAFAENMTIDIMRVRDDDIPGLIMDGVVDLGIIGENVLEEALLTRQSQGDNPCYVTLRRLDFGDCRLSMALPMDKPWNGPKCLQGKRIATSYPHLLKQYLDKLGINFKSCLLNGSVEVAPRAGLADAICDLVSTGATLEANGLREVEVIYRSKACLIQRSGNLSKTKQSLIDKLMIRIQGVIQARESKYIMLHAPAERLEEIINLLPGAESPTVLPLAGNQHRVAIYMVSNEALFWETMENLKNLGASSILVLPIEKMME</sequence>
<evidence type="ECO:0000255" key="1">
    <source>
        <dbReference type="HAMAP-Rule" id="MF_00079"/>
    </source>
</evidence>
<keyword id="KW-0028">Amino-acid biosynthesis</keyword>
<keyword id="KW-0067">ATP-binding</keyword>
<keyword id="KW-0963">Cytoplasm</keyword>
<keyword id="KW-0328">Glycosyltransferase</keyword>
<keyword id="KW-0368">Histidine biosynthesis</keyword>
<keyword id="KW-0460">Magnesium</keyword>
<keyword id="KW-0479">Metal-binding</keyword>
<keyword id="KW-0547">Nucleotide-binding</keyword>
<keyword id="KW-1185">Reference proteome</keyword>
<keyword id="KW-0808">Transferase</keyword>
<feature type="chain" id="PRO_0000151841" description="ATP phosphoribosyltransferase">
    <location>
        <begin position="1"/>
        <end position="299"/>
    </location>
</feature>